<keyword id="KW-0963">Cytoplasm</keyword>
<keyword id="KW-0489">Methyltransferase</keyword>
<keyword id="KW-0949">S-adenosyl-L-methionine</keyword>
<keyword id="KW-0808">Transferase</keyword>
<name>PIMT_SALPA</name>
<reference key="1">
    <citation type="journal article" date="2004" name="Nat. Genet.">
        <title>Comparison of genome degradation in Paratyphi A and Typhi, human-restricted serovars of Salmonella enterica that cause typhoid.</title>
        <authorList>
            <person name="McClelland M."/>
            <person name="Sanderson K.E."/>
            <person name="Clifton S.W."/>
            <person name="Latreille P."/>
            <person name="Porwollik S."/>
            <person name="Sabo A."/>
            <person name="Meyer R."/>
            <person name="Bieri T."/>
            <person name="Ozersky P."/>
            <person name="McLellan M."/>
            <person name="Harkins C.R."/>
            <person name="Wang C."/>
            <person name="Nguyen C."/>
            <person name="Berghoff A."/>
            <person name="Elliott G."/>
            <person name="Kohlberg S."/>
            <person name="Strong C."/>
            <person name="Du F."/>
            <person name="Carter J."/>
            <person name="Kremizki C."/>
            <person name="Layman D."/>
            <person name="Leonard S."/>
            <person name="Sun H."/>
            <person name="Fulton L."/>
            <person name="Nash W."/>
            <person name="Miner T."/>
            <person name="Minx P."/>
            <person name="Delehaunty K."/>
            <person name="Fronick C."/>
            <person name="Magrini V."/>
            <person name="Nhan M."/>
            <person name="Warren W."/>
            <person name="Florea L."/>
            <person name="Spieth J."/>
            <person name="Wilson R.K."/>
        </authorList>
    </citation>
    <scope>NUCLEOTIDE SEQUENCE [LARGE SCALE GENOMIC DNA]</scope>
    <source>
        <strain>ATCC 9150 / SARB42</strain>
    </source>
</reference>
<sequence>MVSGRVQALLEQLRAQGIRDELVLNALAAVPREKFIDEAFEHKAWENIALPIGQGQTISQPYMVARMTELLELTPQSRVLEIGTGSGYQTAILAHLVHHVCSVERIKGLQWQARRRLKQLDLHNVSTRHGDGWQGWQARAPFDAIIVTAAPPEIPTALMAQLDEGGILVLPVGDEQQFLKRVRRRGGEFIIDTVEAVRFVPLVKGELA</sequence>
<dbReference type="EC" id="2.1.1.77" evidence="1"/>
<dbReference type="EMBL" id="CP000026">
    <property type="protein sequence ID" value="AAV78637.1"/>
    <property type="molecule type" value="Genomic_DNA"/>
</dbReference>
<dbReference type="RefSeq" id="WP_000253542.1">
    <property type="nucleotide sequence ID" value="NC_006511.1"/>
</dbReference>
<dbReference type="SMR" id="Q5PEE9"/>
<dbReference type="KEGG" id="spt:SPA2782"/>
<dbReference type="HOGENOM" id="CLU_055432_2_0_6"/>
<dbReference type="Proteomes" id="UP000008185">
    <property type="component" value="Chromosome"/>
</dbReference>
<dbReference type="GO" id="GO:0005737">
    <property type="term" value="C:cytoplasm"/>
    <property type="evidence" value="ECO:0007669"/>
    <property type="project" value="UniProtKB-SubCell"/>
</dbReference>
<dbReference type="GO" id="GO:0004719">
    <property type="term" value="F:protein-L-isoaspartate (D-aspartate) O-methyltransferase activity"/>
    <property type="evidence" value="ECO:0007669"/>
    <property type="project" value="UniProtKB-UniRule"/>
</dbReference>
<dbReference type="GO" id="GO:0032259">
    <property type="term" value="P:methylation"/>
    <property type="evidence" value="ECO:0007669"/>
    <property type="project" value="UniProtKB-KW"/>
</dbReference>
<dbReference type="GO" id="GO:0036211">
    <property type="term" value="P:protein modification process"/>
    <property type="evidence" value="ECO:0007669"/>
    <property type="project" value="UniProtKB-UniRule"/>
</dbReference>
<dbReference type="GO" id="GO:0030091">
    <property type="term" value="P:protein repair"/>
    <property type="evidence" value="ECO:0007669"/>
    <property type="project" value="UniProtKB-UniRule"/>
</dbReference>
<dbReference type="CDD" id="cd02440">
    <property type="entry name" value="AdoMet_MTases"/>
    <property type="match status" value="1"/>
</dbReference>
<dbReference type="FunFam" id="3.40.50.150:FF:000010">
    <property type="entry name" value="Protein-L-isoaspartate O-methyltransferase"/>
    <property type="match status" value="1"/>
</dbReference>
<dbReference type="Gene3D" id="3.40.50.150">
    <property type="entry name" value="Vaccinia Virus protein VP39"/>
    <property type="match status" value="1"/>
</dbReference>
<dbReference type="HAMAP" id="MF_00090">
    <property type="entry name" value="PIMT"/>
    <property type="match status" value="1"/>
</dbReference>
<dbReference type="InterPro" id="IPR000682">
    <property type="entry name" value="PCMT"/>
</dbReference>
<dbReference type="InterPro" id="IPR029063">
    <property type="entry name" value="SAM-dependent_MTases_sf"/>
</dbReference>
<dbReference type="NCBIfam" id="TIGR00080">
    <property type="entry name" value="pimt"/>
    <property type="match status" value="1"/>
</dbReference>
<dbReference type="NCBIfam" id="NF001453">
    <property type="entry name" value="PRK00312.1"/>
    <property type="match status" value="1"/>
</dbReference>
<dbReference type="PANTHER" id="PTHR11579">
    <property type="entry name" value="PROTEIN-L-ISOASPARTATE O-METHYLTRANSFERASE"/>
    <property type="match status" value="1"/>
</dbReference>
<dbReference type="PANTHER" id="PTHR11579:SF0">
    <property type="entry name" value="PROTEIN-L-ISOASPARTATE(D-ASPARTATE) O-METHYLTRANSFERASE"/>
    <property type="match status" value="1"/>
</dbReference>
<dbReference type="Pfam" id="PF01135">
    <property type="entry name" value="PCMT"/>
    <property type="match status" value="1"/>
</dbReference>
<dbReference type="SUPFAM" id="SSF53335">
    <property type="entry name" value="S-adenosyl-L-methionine-dependent methyltransferases"/>
    <property type="match status" value="1"/>
</dbReference>
<dbReference type="PROSITE" id="PS01279">
    <property type="entry name" value="PCMT"/>
    <property type="match status" value="1"/>
</dbReference>
<feature type="chain" id="PRO_1000004824" description="Protein-L-isoaspartate O-methyltransferase">
    <location>
        <begin position="1"/>
        <end position="208"/>
    </location>
</feature>
<feature type="active site" evidence="1">
    <location>
        <position position="59"/>
    </location>
</feature>
<evidence type="ECO:0000255" key="1">
    <source>
        <dbReference type="HAMAP-Rule" id="MF_00090"/>
    </source>
</evidence>
<protein>
    <recommendedName>
        <fullName evidence="1">Protein-L-isoaspartate O-methyltransferase</fullName>
        <ecNumber evidence="1">2.1.1.77</ecNumber>
    </recommendedName>
    <alternativeName>
        <fullName evidence="1">L-isoaspartyl protein carboxyl methyltransferase</fullName>
    </alternativeName>
    <alternativeName>
        <fullName evidence="1">Protein L-isoaspartyl methyltransferase</fullName>
    </alternativeName>
    <alternativeName>
        <fullName evidence="1">Protein-beta-aspartate methyltransferase</fullName>
        <shortName evidence="1">PIMT</shortName>
    </alternativeName>
</protein>
<gene>
    <name evidence="1" type="primary">pcm</name>
    <name type="ordered locus">SPA2782</name>
</gene>
<accession>Q5PEE9</accession>
<comment type="function">
    <text evidence="1">Catalyzes the methyl esterification of L-isoaspartyl residues in peptides and proteins that result from spontaneous decomposition of normal L-aspartyl and L-asparaginyl residues. It plays a role in the repair and/or degradation of damaged proteins.</text>
</comment>
<comment type="catalytic activity">
    <reaction evidence="1">
        <text>[protein]-L-isoaspartate + S-adenosyl-L-methionine = [protein]-L-isoaspartate alpha-methyl ester + S-adenosyl-L-homocysteine</text>
        <dbReference type="Rhea" id="RHEA:12705"/>
        <dbReference type="Rhea" id="RHEA-COMP:12143"/>
        <dbReference type="Rhea" id="RHEA-COMP:12144"/>
        <dbReference type="ChEBI" id="CHEBI:57856"/>
        <dbReference type="ChEBI" id="CHEBI:59789"/>
        <dbReference type="ChEBI" id="CHEBI:90596"/>
        <dbReference type="ChEBI" id="CHEBI:90598"/>
        <dbReference type="EC" id="2.1.1.77"/>
    </reaction>
</comment>
<comment type="subcellular location">
    <subcellularLocation>
        <location evidence="1">Cytoplasm</location>
    </subcellularLocation>
</comment>
<comment type="similarity">
    <text evidence="1">Belongs to the methyltransferase superfamily. L-isoaspartyl/D-aspartyl protein methyltransferase family.</text>
</comment>
<proteinExistence type="inferred from homology"/>
<organism>
    <name type="scientific">Salmonella paratyphi A (strain ATCC 9150 / SARB42)</name>
    <dbReference type="NCBI Taxonomy" id="295319"/>
    <lineage>
        <taxon>Bacteria</taxon>
        <taxon>Pseudomonadati</taxon>
        <taxon>Pseudomonadota</taxon>
        <taxon>Gammaproteobacteria</taxon>
        <taxon>Enterobacterales</taxon>
        <taxon>Enterobacteriaceae</taxon>
        <taxon>Salmonella</taxon>
    </lineage>
</organism>